<name>HIS2_VIBPA</name>
<gene>
    <name evidence="1" type="primary">hisI</name>
    <name evidence="1" type="synonym">hisIE</name>
    <name type="ordered locus">VP1144</name>
</gene>
<protein>
    <recommendedName>
        <fullName evidence="1">Histidine biosynthesis bifunctional protein HisIE</fullName>
    </recommendedName>
    <domain>
        <recommendedName>
            <fullName evidence="1">Phosphoribosyl-AMP cyclohydrolase</fullName>
            <shortName evidence="1">PRA-CH</shortName>
            <ecNumber evidence="1">3.5.4.19</ecNumber>
        </recommendedName>
    </domain>
    <domain>
        <recommendedName>
            <fullName evidence="1">Phosphoribosyl-ATP pyrophosphatase</fullName>
            <shortName evidence="1">PRA-PH</shortName>
            <ecNumber evidence="1">3.6.1.31</ecNumber>
        </recommendedName>
    </domain>
</protein>
<sequence length="211" mass="23254">MSFKAAEVSSLSERINWEKVDGLVPAIVQDFQSSQVLMMGYMNQDALAKTGETGQVTFFSRTKERLWTKGETSGNVLQLVNISLDCDNDTLLVRVNPIGPTCHTGTTTCWDGDAQEESQMVWLHQLEQLLAARKSADPDSSYTASLYARGTKRISQKVGEEGVEVALAATSGDKAELVCESADLIYHLLVLLQDQGLSMNDVVNKLKERHK</sequence>
<keyword id="KW-0028">Amino-acid biosynthesis</keyword>
<keyword id="KW-0067">ATP-binding</keyword>
<keyword id="KW-0963">Cytoplasm</keyword>
<keyword id="KW-0368">Histidine biosynthesis</keyword>
<keyword id="KW-0378">Hydrolase</keyword>
<keyword id="KW-0511">Multifunctional enzyme</keyword>
<keyword id="KW-0547">Nucleotide-binding</keyword>
<organism>
    <name type="scientific">Vibrio parahaemolyticus serotype O3:K6 (strain RIMD 2210633)</name>
    <dbReference type="NCBI Taxonomy" id="223926"/>
    <lineage>
        <taxon>Bacteria</taxon>
        <taxon>Pseudomonadati</taxon>
        <taxon>Pseudomonadota</taxon>
        <taxon>Gammaproteobacteria</taxon>
        <taxon>Vibrionales</taxon>
        <taxon>Vibrionaceae</taxon>
        <taxon>Vibrio</taxon>
    </lineage>
</organism>
<dbReference type="EC" id="3.5.4.19" evidence="1"/>
<dbReference type="EC" id="3.6.1.31" evidence="1"/>
<dbReference type="EMBL" id="BA000031">
    <property type="protein sequence ID" value="BAC59407.1"/>
    <property type="molecule type" value="Genomic_DNA"/>
</dbReference>
<dbReference type="RefSeq" id="NP_797523.1">
    <property type="nucleotide sequence ID" value="NC_004603.1"/>
</dbReference>
<dbReference type="RefSeq" id="WP_005460001.1">
    <property type="nucleotide sequence ID" value="NC_004603.1"/>
</dbReference>
<dbReference type="SMR" id="Q87QK5"/>
<dbReference type="GeneID" id="1188649"/>
<dbReference type="KEGG" id="vpa:VP1144"/>
<dbReference type="PATRIC" id="fig|223926.6.peg.1086"/>
<dbReference type="eggNOG" id="COG0139">
    <property type="taxonomic scope" value="Bacteria"/>
</dbReference>
<dbReference type="eggNOG" id="COG0140">
    <property type="taxonomic scope" value="Bacteria"/>
</dbReference>
<dbReference type="HOGENOM" id="CLU_048577_3_1_6"/>
<dbReference type="UniPathway" id="UPA00031">
    <property type="reaction ID" value="UER00007"/>
</dbReference>
<dbReference type="UniPathway" id="UPA00031">
    <property type="reaction ID" value="UER00008"/>
</dbReference>
<dbReference type="Proteomes" id="UP000002493">
    <property type="component" value="Chromosome 1"/>
</dbReference>
<dbReference type="GO" id="GO:0005737">
    <property type="term" value="C:cytoplasm"/>
    <property type="evidence" value="ECO:0007669"/>
    <property type="project" value="UniProtKB-SubCell"/>
</dbReference>
<dbReference type="GO" id="GO:0005524">
    <property type="term" value="F:ATP binding"/>
    <property type="evidence" value="ECO:0007669"/>
    <property type="project" value="UniProtKB-KW"/>
</dbReference>
<dbReference type="GO" id="GO:0004635">
    <property type="term" value="F:phosphoribosyl-AMP cyclohydrolase activity"/>
    <property type="evidence" value="ECO:0007669"/>
    <property type="project" value="UniProtKB-UniRule"/>
</dbReference>
<dbReference type="GO" id="GO:0004636">
    <property type="term" value="F:phosphoribosyl-ATP diphosphatase activity"/>
    <property type="evidence" value="ECO:0007669"/>
    <property type="project" value="UniProtKB-UniRule"/>
</dbReference>
<dbReference type="GO" id="GO:0000105">
    <property type="term" value="P:L-histidine biosynthetic process"/>
    <property type="evidence" value="ECO:0007669"/>
    <property type="project" value="UniProtKB-UniRule"/>
</dbReference>
<dbReference type="CDD" id="cd11534">
    <property type="entry name" value="NTP-PPase_HisIE_like"/>
    <property type="match status" value="1"/>
</dbReference>
<dbReference type="FunFam" id="1.10.287.1080:FF:000002">
    <property type="entry name" value="Histidine biosynthesis bifunctional protein HisIE"/>
    <property type="match status" value="1"/>
</dbReference>
<dbReference type="FunFam" id="3.10.20.810:FF:000001">
    <property type="entry name" value="Histidine biosynthesis bifunctional protein HisIE"/>
    <property type="match status" value="1"/>
</dbReference>
<dbReference type="Gene3D" id="1.10.287.1080">
    <property type="entry name" value="MazG-like"/>
    <property type="match status" value="1"/>
</dbReference>
<dbReference type="Gene3D" id="3.10.20.810">
    <property type="entry name" value="Phosphoribosyl-AMP cyclohydrolase"/>
    <property type="match status" value="1"/>
</dbReference>
<dbReference type="HAMAP" id="MF_01020">
    <property type="entry name" value="HisE"/>
    <property type="match status" value="1"/>
</dbReference>
<dbReference type="HAMAP" id="MF_01019">
    <property type="entry name" value="HisIE"/>
    <property type="match status" value="1"/>
</dbReference>
<dbReference type="InterPro" id="IPR023019">
    <property type="entry name" value="His_synth_HisIE"/>
</dbReference>
<dbReference type="InterPro" id="IPR008179">
    <property type="entry name" value="HisE"/>
</dbReference>
<dbReference type="InterPro" id="IPR021130">
    <property type="entry name" value="PRib-ATP_PPHydrolase-like"/>
</dbReference>
<dbReference type="InterPro" id="IPR002496">
    <property type="entry name" value="PRib_AMP_CycHydrolase_dom"/>
</dbReference>
<dbReference type="InterPro" id="IPR038019">
    <property type="entry name" value="PRib_AMP_CycHydrolase_sf"/>
</dbReference>
<dbReference type="NCBIfam" id="TIGR03188">
    <property type="entry name" value="histidine_hisI"/>
    <property type="match status" value="1"/>
</dbReference>
<dbReference type="NCBIfam" id="NF000768">
    <property type="entry name" value="PRK00051.1"/>
    <property type="match status" value="1"/>
</dbReference>
<dbReference type="NCBIfam" id="NF002747">
    <property type="entry name" value="PRK02759.1"/>
    <property type="match status" value="1"/>
</dbReference>
<dbReference type="PANTHER" id="PTHR42945">
    <property type="entry name" value="HISTIDINE BIOSYNTHESIS BIFUNCTIONAL PROTEIN"/>
    <property type="match status" value="1"/>
</dbReference>
<dbReference type="PANTHER" id="PTHR42945:SF9">
    <property type="entry name" value="HISTIDINE BIOSYNTHESIS BIFUNCTIONAL PROTEIN HISIE"/>
    <property type="match status" value="1"/>
</dbReference>
<dbReference type="Pfam" id="PF01502">
    <property type="entry name" value="PRA-CH"/>
    <property type="match status" value="1"/>
</dbReference>
<dbReference type="Pfam" id="PF01503">
    <property type="entry name" value="PRA-PH"/>
    <property type="match status" value="1"/>
</dbReference>
<dbReference type="SUPFAM" id="SSF101386">
    <property type="entry name" value="all-alpha NTP pyrophosphatases"/>
    <property type="match status" value="1"/>
</dbReference>
<dbReference type="SUPFAM" id="SSF141734">
    <property type="entry name" value="HisI-like"/>
    <property type="match status" value="1"/>
</dbReference>
<feature type="chain" id="PRO_0000136446" description="Histidine biosynthesis bifunctional protein HisIE">
    <location>
        <begin position="1"/>
        <end position="211"/>
    </location>
</feature>
<feature type="region of interest" description="Phosphoribosyl-AMP cyclohydrolase">
    <location>
        <begin position="1"/>
        <end position="122"/>
    </location>
</feature>
<feature type="region of interest" description="Phosphoribosyl-ATP pyrophosphohydrolase">
    <location>
        <begin position="123"/>
        <end position="211"/>
    </location>
</feature>
<proteinExistence type="inferred from homology"/>
<accession>Q87QK5</accession>
<reference key="1">
    <citation type="journal article" date="2003" name="Lancet">
        <title>Genome sequence of Vibrio parahaemolyticus: a pathogenic mechanism distinct from that of V. cholerae.</title>
        <authorList>
            <person name="Makino K."/>
            <person name="Oshima K."/>
            <person name="Kurokawa K."/>
            <person name="Yokoyama K."/>
            <person name="Uda T."/>
            <person name="Tagomori K."/>
            <person name="Iijima Y."/>
            <person name="Najima M."/>
            <person name="Nakano M."/>
            <person name="Yamashita A."/>
            <person name="Kubota Y."/>
            <person name="Kimura S."/>
            <person name="Yasunaga T."/>
            <person name="Honda T."/>
            <person name="Shinagawa H."/>
            <person name="Hattori M."/>
            <person name="Iida T."/>
        </authorList>
    </citation>
    <scope>NUCLEOTIDE SEQUENCE [LARGE SCALE GENOMIC DNA]</scope>
    <source>
        <strain>RIMD 2210633</strain>
    </source>
</reference>
<comment type="catalytic activity">
    <reaction evidence="1">
        <text>1-(5-phospho-beta-D-ribosyl)-ATP + H2O = 1-(5-phospho-beta-D-ribosyl)-5'-AMP + diphosphate + H(+)</text>
        <dbReference type="Rhea" id="RHEA:22828"/>
        <dbReference type="ChEBI" id="CHEBI:15377"/>
        <dbReference type="ChEBI" id="CHEBI:15378"/>
        <dbReference type="ChEBI" id="CHEBI:33019"/>
        <dbReference type="ChEBI" id="CHEBI:59457"/>
        <dbReference type="ChEBI" id="CHEBI:73183"/>
        <dbReference type="EC" id="3.6.1.31"/>
    </reaction>
</comment>
<comment type="catalytic activity">
    <reaction evidence="1">
        <text>1-(5-phospho-beta-D-ribosyl)-5'-AMP + H2O = 1-(5-phospho-beta-D-ribosyl)-5-[(5-phospho-beta-D-ribosylamino)methylideneamino]imidazole-4-carboxamide</text>
        <dbReference type="Rhea" id="RHEA:20049"/>
        <dbReference type="ChEBI" id="CHEBI:15377"/>
        <dbReference type="ChEBI" id="CHEBI:58435"/>
        <dbReference type="ChEBI" id="CHEBI:59457"/>
        <dbReference type="EC" id="3.5.4.19"/>
    </reaction>
</comment>
<comment type="pathway">
    <text evidence="1">Amino-acid biosynthesis; L-histidine biosynthesis; L-histidine from 5-phospho-alpha-D-ribose 1-diphosphate: step 2/9.</text>
</comment>
<comment type="pathway">
    <text evidence="1">Amino-acid biosynthesis; L-histidine biosynthesis; L-histidine from 5-phospho-alpha-D-ribose 1-diphosphate: step 3/9.</text>
</comment>
<comment type="subcellular location">
    <subcellularLocation>
        <location evidence="1">Cytoplasm</location>
    </subcellularLocation>
</comment>
<comment type="similarity">
    <text evidence="1">In the N-terminal section; belongs to the PRA-CH family.</text>
</comment>
<comment type="similarity">
    <text evidence="1">In the C-terminal section; belongs to the PRA-PH family.</text>
</comment>
<evidence type="ECO:0000255" key="1">
    <source>
        <dbReference type="HAMAP-Rule" id="MF_01019"/>
    </source>
</evidence>